<sequence>MAFQLALDALAPTTHRDPSLHPILESTVDSIRSSIQTYPWSIPKELLPLLNSYGIPTSGLGTSHHPHAAHKTIETFLLCTHWSFQATTPSSVMFMKPSKFNKLAQVNSNFRELKNYRLHPNDSTRYPFTSPDLPVFPTIFMHDALMYYHPSQIMDLFLQKPNLERLYASLVVPPEAHLSDQSFFPKLYTYTTTRHTLHYVPEGHEAGSYNQPSDAHSWLRINSIRLGNHHLSVTILESWGPVHSLLIQRGTPPPDPSLQAPSTPMASDLFRSYQEPRLDVVSFRIPDAIELPQATFLQQPLRDRLVPRAVYNALFTYTRAVRTLRTSDPAAFVRMHSSKPDHDWVTSNAWDNLQTFALLNVPLRPNVVYHVLQSPIASLALYLRQHWRRLTATAVPILSFLTLLQRFLPLPIPLAEVKSITAFRRELYRKKAPHHPLDVFHLQQHLRNHHSAISAVRPASPPHQRLPHALQKAALLLLRPISPLLTATPFFRSEQKSMLPNAELSWTLKRFALPWQASLVLLSLSESSVLLHKLFSPPTLQAQHDTYHRHLHPGSYSLQWERTPLSIPRTTAFLPFTPTTSTAPPDHSEASLPPAFASTSVPRPPPVASSLGAQPPTTTAAPPTPIEPTQRAHQNSDLTLESSTPIEPPPPPIQSSDIPPSAPVLFPEINSPHRFSPKLPTTPDFEPTRTSPPPSTSHQDSTDPADPLMGSHLLHHSLPAPPTHPLQSSQLLPAPLTNDPTAIGPVLPFEELHPRRYPENTATFLTRLRSLPSNHLPQPTLNCLLSAVSDQTKVSEDHLWESLQTILPDSQLRNEEINSLGLSTEHLTALAHLYNFQATIYSDRGPILFGPSDTIKRIDITHTTGPPSHFSPGKRLLGSQPSAKGHPSDSLIRAMKSFKVSGNYLPFSEAHNHPTSISHAKNLVSNMKNGFDGILSLLDVSTGQRTGPTPKDAIIQIDHYLDTNPGKTTPVVHFAGFAGCGKTYPIQQLLKTKLFKDFRVSCPTTELRTEWKTAMELHGSQSWRFNTWESSILKSSRILVIDEIYKMPRGYLDLSILADPALELVIILGDPLQGEYHSQSKDSSNHRLPSETLRLLPYIDMYCWWSYRIPQCIARLFQIHSFNAWQGIIGSVSTPQDQSPVLTNSHASSLTFNSLGYRSCTISSSQGLTFCDPAIIVLDNYTKWLSSANGLVALTRSRSGVQFMGPSSYVGGTNGSSAMFSDAFNNSLIIMDRYFPSLFPQLKLITSPLTTRSPKLNGATPSASPTHRSPNFHLPPHIPLSYDRDFVTVNPTLPDQGPETRLDTHFLPPSRLPLHFDLPPAITPPPISTSVDPPQAKASPVYPGEFFDSLAAFFLPAHDPSTREVLHKDQSSNQFPWFDRPFSLSCQPSSLISAKHAPNHDPTLLPASINKRLRFRPSEAPHQITADDVVLGLQLFHSLCRAYSRQPNITVPFNPELFAECISLNEYAQLSSKTQSTIVANASRSDPDWRHTTVKIFAKAQHKVNDGSIFGSWKACQTLALMHDYVILVLGPVKKYQRIFDNVDRPSHIYSHCGKTPNQLRDWCQEHLTHSTPKIANDYTAFDQSQHGESVVLEALKMKRLNIPSHLIQLHVHLKTNVSTQFGPLTCMRLTGEPGTYDDNTDYNLAVIYSQYDVGSCPIMVSGDDSLIDHPLPTRHDWPSVLKRLHLRFKLELTSHPLFCGYYVGPAGCIRNPLALFCKLMIAVDDDALDDRRLSYLTEFTTGHLLGESLWHLLPETHVQYQSACFDFFCRRCPKHEKMLLDDSTPTLSLLERITSSPRWLTKNAMYLLPAKLRLAITSLSQTQSFPESIEVSHAESELLHYVQ</sequence>
<organism>
    <name type="scientific">Turnip yellow mosaic virus (isolate Australia)</name>
    <dbReference type="NCBI Taxonomy" id="12155"/>
    <lineage>
        <taxon>Viruses</taxon>
        <taxon>Riboviria</taxon>
        <taxon>Orthornavirae</taxon>
        <taxon>Kitrinoviricota</taxon>
        <taxon>Alsuviricetes</taxon>
        <taxon>Tymovirales</taxon>
        <taxon>Tymoviridae</taxon>
        <taxon>Tymovirus</taxon>
        <taxon>Tymovirus brassicae</taxon>
    </lineage>
</organism>
<protein>
    <recommendedName>
        <fullName evidence="7">Non-structural replication polyprotein</fullName>
    </recommendedName>
    <alternativeName>
        <fullName>206 kDa polyprotein</fullName>
    </alternativeName>
    <alternativeName>
        <fullName>206K</fullName>
    </alternativeName>
    <component>
        <recommendedName>
            <fullName>Methyltransferase/Protease/Ubiquitinyl hydrolase</fullName>
            <ecNumber>2.1.1.-</ecNumber>
            <ecNumber evidence="1">3.4.19.12</ecNumber>
            <ecNumber>3.4.22.-</ecNumber>
        </recommendedName>
        <alternativeName>
            <fullName>98 kDa protein</fullName>
        </alternativeName>
        <alternativeName>
            <fullName>MET/PRO</fullName>
        </alternativeName>
    </component>
    <component>
        <recommendedName>
            <fullName>Putative helicase</fullName>
            <ecNumber>3.6.4.-</ecNumber>
        </recommendedName>
        <alternativeName>
            <fullName>42 kDa protein</fullName>
        </alternativeName>
        <alternativeName>
            <fullName>HEL</fullName>
        </alternativeName>
    </component>
    <component>
        <recommendedName>
            <fullName>RNA-directed RNA polymerase</fullName>
            <ecNumber>2.7.7.48</ecNumber>
        </recommendedName>
        <alternativeName>
            <fullName>66 kDa protein</fullName>
        </alternativeName>
        <alternativeName>
            <fullName>POL</fullName>
        </alternativeName>
    </component>
</protein>
<proteinExistence type="inferred from homology"/>
<dbReference type="EC" id="2.1.1.-"/>
<dbReference type="EC" id="3.4.19.12" evidence="1"/>
<dbReference type="EC" id="3.4.22.-"/>
<dbReference type="EC" id="3.6.4.-"/>
<dbReference type="EC" id="2.7.7.48"/>
<dbReference type="EMBL" id="J04373">
    <property type="protein sequence ID" value="AAA46592.1"/>
    <property type="molecule type" value="Genomic_RNA"/>
</dbReference>
<dbReference type="PIR" id="JQ0109">
    <property type="entry name" value="RRWPTM"/>
</dbReference>
<dbReference type="MEROPS" id="C21.001"/>
<dbReference type="Proteomes" id="UP000008268">
    <property type="component" value="Genome"/>
</dbReference>
<dbReference type="GO" id="GO:0005524">
    <property type="term" value="F:ATP binding"/>
    <property type="evidence" value="ECO:0007669"/>
    <property type="project" value="UniProtKB-KW"/>
</dbReference>
<dbReference type="GO" id="GO:0004197">
    <property type="term" value="F:cysteine-type endopeptidase activity"/>
    <property type="evidence" value="ECO:0007669"/>
    <property type="project" value="InterPro"/>
</dbReference>
<dbReference type="GO" id="GO:0008174">
    <property type="term" value="F:mRNA methyltransferase activity"/>
    <property type="evidence" value="ECO:0007669"/>
    <property type="project" value="InterPro"/>
</dbReference>
<dbReference type="GO" id="GO:0003723">
    <property type="term" value="F:RNA binding"/>
    <property type="evidence" value="ECO:0007669"/>
    <property type="project" value="InterPro"/>
</dbReference>
<dbReference type="GO" id="GO:0003968">
    <property type="term" value="F:RNA-directed RNA polymerase activity"/>
    <property type="evidence" value="ECO:0007669"/>
    <property type="project" value="UniProtKB-KW"/>
</dbReference>
<dbReference type="GO" id="GO:0006351">
    <property type="term" value="P:DNA-templated transcription"/>
    <property type="evidence" value="ECO:0007669"/>
    <property type="project" value="InterPro"/>
</dbReference>
<dbReference type="GO" id="GO:0032259">
    <property type="term" value="P:methylation"/>
    <property type="evidence" value="ECO:0007669"/>
    <property type="project" value="UniProtKB-KW"/>
</dbReference>
<dbReference type="GO" id="GO:0016556">
    <property type="term" value="P:mRNA modification"/>
    <property type="evidence" value="ECO:0007669"/>
    <property type="project" value="InterPro"/>
</dbReference>
<dbReference type="GO" id="GO:0006508">
    <property type="term" value="P:proteolysis"/>
    <property type="evidence" value="ECO:0007669"/>
    <property type="project" value="UniProtKB-KW"/>
</dbReference>
<dbReference type="GO" id="GO:0006396">
    <property type="term" value="P:RNA processing"/>
    <property type="evidence" value="ECO:0007669"/>
    <property type="project" value="InterPro"/>
</dbReference>
<dbReference type="GO" id="GO:0039648">
    <property type="term" value="P:symbiont-mediated perturbation of host ubiquitin-like protein modification"/>
    <property type="evidence" value="ECO:0007669"/>
    <property type="project" value="UniProtKB-KW"/>
</dbReference>
<dbReference type="GO" id="GO:0039694">
    <property type="term" value="P:viral RNA genome replication"/>
    <property type="evidence" value="ECO:0007669"/>
    <property type="project" value="InterPro"/>
</dbReference>
<dbReference type="CDD" id="cd23247">
    <property type="entry name" value="Tymoviridae_RdRp"/>
    <property type="match status" value="1"/>
</dbReference>
<dbReference type="Gene3D" id="3.90.70.100">
    <property type="match status" value="1"/>
</dbReference>
<dbReference type="Gene3D" id="3.40.50.300">
    <property type="entry name" value="P-loop containing nucleotide triphosphate hydrolases"/>
    <property type="match status" value="1"/>
</dbReference>
<dbReference type="InterPro" id="IPR027351">
    <property type="entry name" value="(+)RNA_virus_helicase_core_dom"/>
</dbReference>
<dbReference type="InterPro" id="IPR002588">
    <property type="entry name" value="Alphavirus-like_MT_dom"/>
</dbReference>
<dbReference type="InterPro" id="IPR043502">
    <property type="entry name" value="DNA/RNA_pol_sf"/>
</dbReference>
<dbReference type="InterPro" id="IPR027417">
    <property type="entry name" value="P-loop_NTPase"/>
</dbReference>
<dbReference type="InterPro" id="IPR008043">
    <property type="entry name" value="Peptidase_C21"/>
</dbReference>
<dbReference type="InterPro" id="IPR001788">
    <property type="entry name" value="RNA-dep_RNA_pol_alsuvir"/>
</dbReference>
<dbReference type="InterPro" id="IPR007094">
    <property type="entry name" value="RNA-dir_pol_PSvirus"/>
</dbReference>
<dbReference type="InterPro" id="IPR043629">
    <property type="entry name" value="Salyut_dom"/>
</dbReference>
<dbReference type="InterPro" id="IPR043181">
    <property type="entry name" value="TYMV_endopept_dom"/>
</dbReference>
<dbReference type="Pfam" id="PF05381">
    <property type="entry name" value="Peptidase_C21"/>
    <property type="match status" value="1"/>
</dbReference>
<dbReference type="Pfam" id="PF00978">
    <property type="entry name" value="RdRP_2"/>
    <property type="match status" value="1"/>
</dbReference>
<dbReference type="Pfam" id="PF19227">
    <property type="entry name" value="Salyut"/>
    <property type="match status" value="1"/>
</dbReference>
<dbReference type="Pfam" id="PF01443">
    <property type="entry name" value="Viral_helicase1"/>
    <property type="match status" value="1"/>
</dbReference>
<dbReference type="Pfam" id="PF01660">
    <property type="entry name" value="Vmethyltransf"/>
    <property type="match status" value="1"/>
</dbReference>
<dbReference type="SUPFAM" id="SSF56672">
    <property type="entry name" value="DNA/RNA polymerases"/>
    <property type="match status" value="1"/>
</dbReference>
<dbReference type="PROSITE" id="PS51743">
    <property type="entry name" value="ALPHAVIRUS_MT"/>
    <property type="match status" value="1"/>
</dbReference>
<dbReference type="PROSITE" id="PS51738">
    <property type="entry name" value="PEPTIDASE_C21"/>
    <property type="match status" value="1"/>
</dbReference>
<dbReference type="PROSITE" id="PS51657">
    <property type="entry name" value="PSRV_HELICASE"/>
    <property type="match status" value="1"/>
</dbReference>
<dbReference type="PROSITE" id="PS50507">
    <property type="entry name" value="RDRP_SSRNA_POS"/>
    <property type="match status" value="1"/>
</dbReference>
<name>POLN_TYMVA</name>
<reference key="1">
    <citation type="journal article" date="1989" name="Virology">
        <title>Nucleotide sequence of the genome of an Australian isolate of turnip yellow mosaic tymovirus.</title>
        <authorList>
            <person name="Keese P."/>
            <person name="Mackenzie A."/>
            <person name="Gibbs A."/>
        </authorList>
    </citation>
    <scope>NUCLEOTIDE SEQUENCE [GENOMIC RNA]</scope>
</reference>
<accession>P20128</accession>
<keyword id="KW-0067">ATP-binding</keyword>
<keyword id="KW-0945">Host-virus interaction</keyword>
<keyword id="KW-0378">Hydrolase</keyword>
<keyword id="KW-0489">Methyltransferase</keyword>
<keyword id="KW-1127">Modulation of host ubiquitin pathway by viral deubiquitinase</keyword>
<keyword id="KW-1130">Modulation of host ubiquitin pathway by virus</keyword>
<keyword id="KW-0511">Multifunctional enzyme</keyword>
<keyword id="KW-0547">Nucleotide-binding</keyword>
<keyword id="KW-0548">Nucleotidyltransferase</keyword>
<keyword id="KW-0645">Protease</keyword>
<keyword id="KW-0696">RNA-directed RNA polymerase</keyword>
<keyword id="KW-0788">Thiol protease</keyword>
<keyword id="KW-0808">Transferase</keyword>
<keyword id="KW-0693">Viral RNA replication</keyword>
<organismHost>
    <name type="scientific">Brassica</name>
    <dbReference type="NCBI Taxonomy" id="3705"/>
</organismHost>
<organismHost>
    <name type="scientific">Cardamine lilacina</name>
    <dbReference type="NCBI Taxonomy" id="82359"/>
</organismHost>
<feature type="chain" id="PRO_0000222939" description="Non-structural replication polyprotein">
    <location>
        <begin position="1"/>
        <end position="1844"/>
    </location>
</feature>
<feature type="chain" id="PRO_0000455969" description="Methyltransferase/Protease/Ubiquitinyl hydrolase" evidence="1">
    <location>
        <begin position="1"/>
        <end position="879"/>
    </location>
</feature>
<feature type="chain" id="PRO_0000455970" description="Putative helicase" evidence="1">
    <location>
        <begin position="880"/>
        <end position="1259"/>
    </location>
</feature>
<feature type="chain" id="PRO_0000455971" description="RNA-directed RNA polymerase" evidence="1">
    <location>
        <begin position="1260"/>
        <end position="1844"/>
    </location>
</feature>
<feature type="domain" description="Alphavirus-like MT" evidence="5">
    <location>
        <begin position="58"/>
        <end position="219"/>
    </location>
</feature>
<feature type="domain" description="OTU" evidence="1">
    <location>
        <begin position="728"/>
        <end position="879"/>
    </location>
</feature>
<feature type="domain" description="Peptidase C21" evidence="4">
    <location>
        <begin position="730"/>
        <end position="884"/>
    </location>
</feature>
<feature type="domain" description="(+)RNA virus helicase ATP-binding" evidence="3">
    <location>
        <begin position="946"/>
        <end position="1103"/>
    </location>
</feature>
<feature type="domain" description="(+)RNA virus helicase C-terminal" evidence="3">
    <location>
        <begin position="1104"/>
        <end position="1236"/>
    </location>
</feature>
<feature type="domain" description="RdRp catalytic" evidence="2">
    <location>
        <begin position="1572"/>
        <end position="1678"/>
    </location>
</feature>
<feature type="region of interest" description="Disordered" evidence="6">
    <location>
        <begin position="571"/>
        <end position="739"/>
    </location>
</feature>
<feature type="region of interest" description="Disordered" evidence="6">
    <location>
        <begin position="860"/>
        <end position="888"/>
    </location>
</feature>
<feature type="short sequence motif" description="GPP flap" evidence="1">
    <location>
        <begin position="865"/>
        <end position="867"/>
    </location>
</feature>
<feature type="compositionally biased region" description="Polar residues" evidence="6">
    <location>
        <begin position="631"/>
        <end position="641"/>
    </location>
</feature>
<feature type="compositionally biased region" description="Low complexity" evidence="6">
    <location>
        <begin position="725"/>
        <end position="736"/>
    </location>
</feature>
<feature type="active site" description="For protease activity" evidence="4">
    <location>
        <position position="783"/>
    </location>
</feature>
<feature type="active site" description="For protease activity" evidence="4">
    <location>
        <position position="869"/>
    </location>
</feature>
<feature type="binding site" evidence="3">
    <location>
        <begin position="976"/>
        <end position="983"/>
    </location>
    <ligand>
        <name>a ribonucleoside 5'-triphosphate</name>
        <dbReference type="ChEBI" id="CHEBI:61557"/>
    </ligand>
</feature>
<feature type="site" description="Cleavage; by viral protease" evidence="1">
    <location>
        <begin position="879"/>
        <end position="880"/>
    </location>
</feature>
<feature type="site" description="Cleavage; by viral protease" evidence="1">
    <location>
        <begin position="1259"/>
        <end position="1260"/>
    </location>
</feature>
<evidence type="ECO:0000250" key="1">
    <source>
        <dbReference type="UniProtKB" id="P10358"/>
    </source>
</evidence>
<evidence type="ECO:0000255" key="2">
    <source>
        <dbReference type="PROSITE-ProRule" id="PRU00539"/>
    </source>
</evidence>
<evidence type="ECO:0000255" key="3">
    <source>
        <dbReference type="PROSITE-ProRule" id="PRU00990"/>
    </source>
</evidence>
<evidence type="ECO:0000255" key="4">
    <source>
        <dbReference type="PROSITE-ProRule" id="PRU01074"/>
    </source>
</evidence>
<evidence type="ECO:0000255" key="5">
    <source>
        <dbReference type="PROSITE-ProRule" id="PRU01079"/>
    </source>
</evidence>
<evidence type="ECO:0000256" key="6">
    <source>
        <dbReference type="SAM" id="MobiDB-lite"/>
    </source>
</evidence>
<evidence type="ECO:0000305" key="7"/>
<comment type="function">
    <molecule>Methyltransferase/Protease/Ubiquitinyl hydrolase</molecule>
    <text evidence="1">Acts as a cysteine protease, methyltransferase and deubiquitinase. The cysteine protease activity cleaves the polyprotein giving rise to mature proteins. The protease has the ability to process substrates in trans. The methyltransferase domain is probably involved in viral RNA capping. The deubiquitylating activity counteracts the degradation of the viral polymerase mediated by the host ubiquitin-proteasome system. The polymerase is thus stabilized and infectivity is increased. Favors K63 poly-Ub linkage.</text>
</comment>
<comment type="function">
    <molecule>RNA-directed RNA polymerase</molecule>
    <text evidence="1">RNA-directed RNA polymerase is responsible for the replication and transcription of the genome.</text>
</comment>
<comment type="catalytic activity">
    <molecule>Methyltransferase/Protease/Ubiquitinyl hydrolase</molecule>
    <reaction evidence="1">
        <text>Thiol-dependent hydrolysis of ester, thioester, amide, peptide and isopeptide bonds formed by the C-terminal Gly of ubiquitin (a 76-residue protein attached to proteins as an intracellular targeting signal).</text>
        <dbReference type="EC" id="3.4.19.12"/>
    </reaction>
</comment>
<comment type="catalytic activity">
    <molecule>RNA-directed RNA polymerase</molecule>
    <reaction evidence="2">
        <text>RNA(n) + a ribonucleoside 5'-triphosphate = RNA(n+1) + diphosphate</text>
        <dbReference type="Rhea" id="RHEA:21248"/>
        <dbReference type="Rhea" id="RHEA-COMP:14527"/>
        <dbReference type="Rhea" id="RHEA-COMP:17342"/>
        <dbReference type="ChEBI" id="CHEBI:33019"/>
        <dbReference type="ChEBI" id="CHEBI:61557"/>
        <dbReference type="ChEBI" id="CHEBI:140395"/>
        <dbReference type="EC" id="2.7.7.48"/>
    </reaction>
</comment>
<comment type="subunit">
    <molecule>Methyltransferase/Protease/Ubiquitinyl hydrolase</molecule>
    <text evidence="1">Interacts with host ubiquitin.</text>
</comment>
<comment type="subcellular location">
    <molecule>Methyltransferase/Protease/Ubiquitinyl hydrolase</molecule>
    <subcellularLocation>
        <location evidence="1">Host chloroplast envelope</location>
    </subcellularLocation>
</comment>
<comment type="subcellular location">
    <molecule>Putative helicase</molecule>
    <subcellularLocation>
        <location evidence="1">Host chloroplast envelope</location>
    </subcellularLocation>
</comment>
<comment type="subcellular location">
    <molecule>RNA-directed RNA polymerase</molecule>
    <subcellularLocation>
        <location evidence="1">Host chloroplast envelope</location>
    </subcellularLocation>
</comment>
<comment type="domain">
    <molecule>Methyltransferase/Protease/Ubiquitinyl hydrolase</molecule>
    <text evidence="1">The viral OTU domain (vOTU) is responsible for the deubiquitination activity. Both protease (PRO) and deubiquitination (DUB) activities rely on the single catalytic site of the cysteine proteinase. The switch in the PRO/DUB activities is due to the mobility of a GPP flap.</text>
</comment>
<comment type="PTM">
    <text evidence="1">Specific enzymatic cleavages by the host yield mature proteins.</text>
</comment>
<comment type="miscellaneous">
    <molecule>Methyltransferase/Protease/Ubiquitinyl hydrolase</molecule>
    <text evidence="1">The deubiquitinase activity is low compared to that of Bunyaviruses or coronaviruses.</text>
</comment>
<comment type="similarity">
    <text evidence="7">Belongs to the Tymoviridae non-structural replication polyprotein family.</text>
</comment>